<gene>
    <name type="ORF">DDB_G0293016</name>
</gene>
<keyword id="KW-1185">Reference proteome</keyword>
<protein>
    <recommendedName>
        <fullName>Putative uncharacterized protein DDB_G0293016</fullName>
    </recommendedName>
</protein>
<name>Y1715_DICDI</name>
<sequence>MSKDFIYICIILFISYITNNPDKKNFEDQLMVAIKKKKYSFLTNLSVKALLGQFTIYNFKIFSVAYFKDPLKPKATIHSFGFFGRWIFS</sequence>
<reference key="1">
    <citation type="journal article" date="2005" name="Nature">
        <title>The genome of the social amoeba Dictyostelium discoideum.</title>
        <authorList>
            <person name="Eichinger L."/>
            <person name="Pachebat J.A."/>
            <person name="Gloeckner G."/>
            <person name="Rajandream M.A."/>
            <person name="Sucgang R."/>
            <person name="Berriman M."/>
            <person name="Song J."/>
            <person name="Olsen R."/>
            <person name="Szafranski K."/>
            <person name="Xu Q."/>
            <person name="Tunggal B."/>
            <person name="Kummerfeld S."/>
            <person name="Madera M."/>
            <person name="Konfortov B.A."/>
            <person name="Rivero F."/>
            <person name="Bankier A.T."/>
            <person name="Lehmann R."/>
            <person name="Hamlin N."/>
            <person name="Davies R."/>
            <person name="Gaudet P."/>
            <person name="Fey P."/>
            <person name="Pilcher K."/>
            <person name="Chen G."/>
            <person name="Saunders D."/>
            <person name="Sodergren E.J."/>
            <person name="Davis P."/>
            <person name="Kerhornou A."/>
            <person name="Nie X."/>
            <person name="Hall N."/>
            <person name="Anjard C."/>
            <person name="Hemphill L."/>
            <person name="Bason N."/>
            <person name="Farbrother P."/>
            <person name="Desany B."/>
            <person name="Just E."/>
            <person name="Morio T."/>
            <person name="Rost R."/>
            <person name="Churcher C.M."/>
            <person name="Cooper J."/>
            <person name="Haydock S."/>
            <person name="van Driessche N."/>
            <person name="Cronin A."/>
            <person name="Goodhead I."/>
            <person name="Muzny D.M."/>
            <person name="Mourier T."/>
            <person name="Pain A."/>
            <person name="Lu M."/>
            <person name="Harper D."/>
            <person name="Lindsay R."/>
            <person name="Hauser H."/>
            <person name="James K.D."/>
            <person name="Quiles M."/>
            <person name="Madan Babu M."/>
            <person name="Saito T."/>
            <person name="Buchrieser C."/>
            <person name="Wardroper A."/>
            <person name="Felder M."/>
            <person name="Thangavelu M."/>
            <person name="Johnson D."/>
            <person name="Knights A."/>
            <person name="Loulseged H."/>
            <person name="Mungall K.L."/>
            <person name="Oliver K."/>
            <person name="Price C."/>
            <person name="Quail M.A."/>
            <person name="Urushihara H."/>
            <person name="Hernandez J."/>
            <person name="Rabbinowitsch E."/>
            <person name="Steffen D."/>
            <person name="Sanders M."/>
            <person name="Ma J."/>
            <person name="Kohara Y."/>
            <person name="Sharp S."/>
            <person name="Simmonds M.N."/>
            <person name="Spiegler S."/>
            <person name="Tivey A."/>
            <person name="Sugano S."/>
            <person name="White B."/>
            <person name="Walker D."/>
            <person name="Woodward J.R."/>
            <person name="Winckler T."/>
            <person name="Tanaka Y."/>
            <person name="Shaulsky G."/>
            <person name="Schleicher M."/>
            <person name="Weinstock G.M."/>
            <person name="Rosenthal A."/>
            <person name="Cox E.C."/>
            <person name="Chisholm R.L."/>
            <person name="Gibbs R.A."/>
            <person name="Loomis W.F."/>
            <person name="Platzer M."/>
            <person name="Kay R.R."/>
            <person name="Williams J.G."/>
            <person name="Dear P.H."/>
            <person name="Noegel A.A."/>
            <person name="Barrell B.G."/>
            <person name="Kuspa A."/>
        </authorList>
    </citation>
    <scope>NUCLEOTIDE SEQUENCE [LARGE SCALE GENOMIC DNA]</scope>
    <source>
        <strain>AX4</strain>
    </source>
</reference>
<proteinExistence type="predicted"/>
<feature type="chain" id="PRO_0000344388" description="Putative uncharacterized protein DDB_G0293016">
    <location>
        <begin position="1"/>
        <end position="89"/>
    </location>
</feature>
<dbReference type="EMBL" id="AAFI02000199">
    <property type="protein sequence ID" value="EAL60860.1"/>
    <property type="molecule type" value="Genomic_DNA"/>
</dbReference>
<dbReference type="RefSeq" id="XP_629263.1">
    <property type="nucleotide sequence ID" value="XM_629261.1"/>
</dbReference>
<dbReference type="SMR" id="Q54CF6"/>
<dbReference type="PaxDb" id="44689-DDB0191715"/>
<dbReference type="EnsemblProtists" id="EAL60860">
    <property type="protein sequence ID" value="EAL60860"/>
    <property type="gene ID" value="DDB_G0293016"/>
</dbReference>
<dbReference type="GeneID" id="8628983"/>
<dbReference type="KEGG" id="ddi:DDB_G0293016"/>
<dbReference type="dictyBase" id="DDB_G0293016"/>
<dbReference type="VEuPathDB" id="AmoebaDB:DDB_G0293016"/>
<dbReference type="HOGENOM" id="CLU_2459421_0_0_1"/>
<dbReference type="InParanoid" id="Q54CF6"/>
<dbReference type="PRO" id="PR:Q54CF6"/>
<dbReference type="Proteomes" id="UP000002195">
    <property type="component" value="Chromosome 6"/>
</dbReference>
<accession>Q54CF6</accession>
<organism>
    <name type="scientific">Dictyostelium discoideum</name>
    <name type="common">Social amoeba</name>
    <dbReference type="NCBI Taxonomy" id="44689"/>
    <lineage>
        <taxon>Eukaryota</taxon>
        <taxon>Amoebozoa</taxon>
        <taxon>Evosea</taxon>
        <taxon>Eumycetozoa</taxon>
        <taxon>Dictyostelia</taxon>
        <taxon>Dictyosteliales</taxon>
        <taxon>Dictyosteliaceae</taxon>
        <taxon>Dictyostelium</taxon>
    </lineage>
</organism>